<evidence type="ECO:0000250" key="1"/>
<evidence type="ECO:0000250" key="2">
    <source>
        <dbReference type="UniProtKB" id="Q8TBG4"/>
    </source>
</evidence>
<evidence type="ECO:0000256" key="3">
    <source>
        <dbReference type="SAM" id="MobiDB-lite"/>
    </source>
</evidence>
<evidence type="ECO:0000305" key="4"/>
<sequence length="492" mass="54735">MATETLDKQKTIDLRKKHVGPSCKVFFDHDPIKIVRAKGQYMYNEKDEKYLDCINNVAHVGHCHPDVVSAGAKQMELLNTNSRFLHDSLVLYAQRLQATLPEKLSVCYFVNSGSEANDLALRLAWQYTGHKDIITLDNAYHGHVSSLIDISPYKFHQMAGAEPSQHVHVALSPDTYRGKYREDHPDPATAYAENVKEVIEEAHKKGHEIAAFIAESLQSCGGQVIPPMGYFQKVAQHVRNAGGIFIADEVQVGFGRVGTHFWGFQLQGEDFVPDIVTMGKPIGNGHPMSCVITSREIAESFMSSGMEYFNTFGGNPVSCAIGLAVLNVIEKEDLQGNALHVGGYLTQLLEDLKKRHPLVGDVRGRGLFVGLELVRNQSKRTPATAEAQEVIYRLKEQRILLSADGPHRNVLKFKPPMCFSREDAEFAVEKIDQILTDLEKAMVLQRPEAAILETGHIKRKDASDENGLVHPSNGNSHKHTSTIPLSKKTKRN</sequence>
<organism>
    <name type="scientific">Danio rerio</name>
    <name type="common">Zebrafish</name>
    <name type="synonym">Brachydanio rerio</name>
    <dbReference type="NCBI Taxonomy" id="7955"/>
    <lineage>
        <taxon>Eukaryota</taxon>
        <taxon>Metazoa</taxon>
        <taxon>Chordata</taxon>
        <taxon>Craniata</taxon>
        <taxon>Vertebrata</taxon>
        <taxon>Euteleostomi</taxon>
        <taxon>Actinopterygii</taxon>
        <taxon>Neopterygii</taxon>
        <taxon>Teleostei</taxon>
        <taxon>Ostariophysi</taxon>
        <taxon>Cypriniformes</taxon>
        <taxon>Danionidae</taxon>
        <taxon>Danioninae</taxon>
        <taxon>Danio</taxon>
    </lineage>
</organism>
<name>AT2L1_DANRE</name>
<feature type="chain" id="PRO_0000287665" description="Ethanolamine-phosphate phospho-lyase">
    <location>
        <begin position="1"/>
        <end position="492"/>
    </location>
</feature>
<feature type="region of interest" description="Disordered" evidence="3">
    <location>
        <begin position="462"/>
        <end position="492"/>
    </location>
</feature>
<feature type="modified residue" description="N6-(pyridoxal phosphate)lysine" evidence="1">
    <location>
        <position position="280"/>
    </location>
</feature>
<proteinExistence type="evidence at transcript level"/>
<protein>
    <recommendedName>
        <fullName>Ethanolamine-phosphate phospho-lyase</fullName>
        <ecNumber>4.2.3.2</ecNumber>
    </recommendedName>
    <alternativeName>
        <fullName>Alanine--glyoxylate aminotransferase 2-like 1</fullName>
    </alternativeName>
</protein>
<reference key="1">
    <citation type="submission" date="2003-07" db="EMBL/GenBank/DDBJ databases">
        <authorList>
            <consortium name="NIH - Zebrafish Gene Collection (ZGC) project"/>
        </authorList>
    </citation>
    <scope>NUCLEOTIDE SEQUENCE [LARGE SCALE MRNA]</scope>
    <source>
        <strain>AB</strain>
    </source>
</reference>
<keyword id="KW-0456">Lyase</keyword>
<keyword id="KW-0496">Mitochondrion</keyword>
<keyword id="KW-0663">Pyridoxal phosphate</keyword>
<keyword id="KW-1185">Reference proteome</keyword>
<dbReference type="EC" id="4.2.3.2"/>
<dbReference type="EMBL" id="BC055122">
    <property type="protein sequence ID" value="AAH55122.1"/>
    <property type="molecule type" value="mRNA"/>
</dbReference>
<dbReference type="RefSeq" id="NP_956743.1">
    <property type="nucleotide sequence ID" value="NM_200449.1"/>
</dbReference>
<dbReference type="SMR" id="Q7SY54"/>
<dbReference type="FunCoup" id="Q7SY54">
    <property type="interactions" value="59"/>
</dbReference>
<dbReference type="STRING" id="7955.ENSDARP00000051523"/>
<dbReference type="PaxDb" id="7955-ENSDARP00000051523"/>
<dbReference type="Ensembl" id="ENSDART00000051524">
    <property type="protein sequence ID" value="ENSDARP00000051523"/>
    <property type="gene ID" value="ENSDARG00000035544"/>
</dbReference>
<dbReference type="GeneID" id="393421"/>
<dbReference type="KEGG" id="dre:393421"/>
<dbReference type="AGR" id="ZFIN:ZDB-GENE-040426-1133"/>
<dbReference type="CTD" id="64850"/>
<dbReference type="ZFIN" id="ZDB-GENE-040426-1133">
    <property type="gene designation" value="etnppl"/>
</dbReference>
<dbReference type="eggNOG" id="KOG1403">
    <property type="taxonomic scope" value="Eukaryota"/>
</dbReference>
<dbReference type="HOGENOM" id="CLU_016922_8_0_1"/>
<dbReference type="InParanoid" id="Q7SY54"/>
<dbReference type="OMA" id="GAIETMK"/>
<dbReference type="OrthoDB" id="10261433at2759"/>
<dbReference type="PhylomeDB" id="Q7SY54"/>
<dbReference type="TreeFam" id="TF320468"/>
<dbReference type="Reactome" id="R-DRE-1483213">
    <property type="pathway name" value="Synthesis of PE"/>
</dbReference>
<dbReference type="PRO" id="PR:Q7SY54"/>
<dbReference type="Proteomes" id="UP000000437">
    <property type="component" value="Chromosome 7"/>
</dbReference>
<dbReference type="Bgee" id="ENSDARG00000035544">
    <property type="expression patterns" value="Expressed in liver and 14 other cell types or tissues"/>
</dbReference>
<dbReference type="GO" id="GO:0005739">
    <property type="term" value="C:mitochondrion"/>
    <property type="evidence" value="ECO:0007669"/>
    <property type="project" value="UniProtKB-SubCell"/>
</dbReference>
<dbReference type="GO" id="GO:0050459">
    <property type="term" value="F:ethanolamine-phosphate phospho-lyase activity"/>
    <property type="evidence" value="ECO:0000318"/>
    <property type="project" value="GO_Central"/>
</dbReference>
<dbReference type="GO" id="GO:0030170">
    <property type="term" value="F:pyridoxal phosphate binding"/>
    <property type="evidence" value="ECO:0007669"/>
    <property type="project" value="InterPro"/>
</dbReference>
<dbReference type="GO" id="GO:0008483">
    <property type="term" value="F:transaminase activity"/>
    <property type="evidence" value="ECO:0007669"/>
    <property type="project" value="InterPro"/>
</dbReference>
<dbReference type="GO" id="GO:0035162">
    <property type="term" value="P:embryonic hemopoiesis"/>
    <property type="evidence" value="ECO:0000315"/>
    <property type="project" value="ZFIN"/>
</dbReference>
<dbReference type="CDD" id="cd00610">
    <property type="entry name" value="OAT_like"/>
    <property type="match status" value="1"/>
</dbReference>
<dbReference type="FunFam" id="3.40.640.10:FF:000058">
    <property type="entry name" value="ethanolamine-phosphate phospho-lyase isoform X1"/>
    <property type="match status" value="1"/>
</dbReference>
<dbReference type="Gene3D" id="3.90.1150.10">
    <property type="entry name" value="Aspartate Aminotransferase, domain 1"/>
    <property type="match status" value="1"/>
</dbReference>
<dbReference type="Gene3D" id="3.40.640.10">
    <property type="entry name" value="Type I PLP-dependent aspartate aminotransferase-like (Major domain)"/>
    <property type="match status" value="1"/>
</dbReference>
<dbReference type="InterPro" id="IPR005814">
    <property type="entry name" value="Aminotrans_3"/>
</dbReference>
<dbReference type="InterPro" id="IPR049704">
    <property type="entry name" value="Aminotrans_3_PPA_site"/>
</dbReference>
<dbReference type="InterPro" id="IPR015424">
    <property type="entry name" value="PyrdxlP-dep_Trfase"/>
</dbReference>
<dbReference type="InterPro" id="IPR015421">
    <property type="entry name" value="PyrdxlP-dep_Trfase_major"/>
</dbReference>
<dbReference type="InterPro" id="IPR015422">
    <property type="entry name" value="PyrdxlP-dep_Trfase_small"/>
</dbReference>
<dbReference type="PANTHER" id="PTHR45688">
    <property type="match status" value="1"/>
</dbReference>
<dbReference type="PANTHER" id="PTHR45688:SF1">
    <property type="entry name" value="ETHANOLAMINE-PHOSPHATE PHOSPHO-LYASE"/>
    <property type="match status" value="1"/>
</dbReference>
<dbReference type="Pfam" id="PF00202">
    <property type="entry name" value="Aminotran_3"/>
    <property type="match status" value="1"/>
</dbReference>
<dbReference type="PIRSF" id="PIRSF000521">
    <property type="entry name" value="Transaminase_4ab_Lys_Orn"/>
    <property type="match status" value="1"/>
</dbReference>
<dbReference type="SUPFAM" id="SSF53383">
    <property type="entry name" value="PLP-dependent transferases"/>
    <property type="match status" value="1"/>
</dbReference>
<dbReference type="PROSITE" id="PS00600">
    <property type="entry name" value="AA_TRANSFER_CLASS_3"/>
    <property type="match status" value="1"/>
</dbReference>
<comment type="function">
    <text evidence="1">Catalyzes the pyridoxal-phosphate-dependent breakdown of phosphoethanolamine, converting it to ammonia, inorganic phosphate and acetaldehyde.</text>
</comment>
<comment type="catalytic activity">
    <reaction>
        <text>phosphoethanolamine + H2O = acetaldehyde + NH4(+) + phosphate</text>
        <dbReference type="Rhea" id="RHEA:17889"/>
        <dbReference type="ChEBI" id="CHEBI:15343"/>
        <dbReference type="ChEBI" id="CHEBI:15377"/>
        <dbReference type="ChEBI" id="CHEBI:28938"/>
        <dbReference type="ChEBI" id="CHEBI:43474"/>
        <dbReference type="ChEBI" id="CHEBI:58190"/>
        <dbReference type="EC" id="4.2.3.2"/>
    </reaction>
</comment>
<comment type="cofactor">
    <cofactor evidence="1">
        <name>pyridoxal 5'-phosphate</name>
        <dbReference type="ChEBI" id="CHEBI:597326"/>
    </cofactor>
</comment>
<comment type="subunit">
    <text evidence="1">Homotetramer.</text>
</comment>
<comment type="subcellular location">
    <subcellularLocation>
        <location evidence="4">Mitochondrion</location>
    </subcellularLocation>
</comment>
<comment type="similarity">
    <text evidence="4">Belongs to the class-III pyridoxal-phosphate-dependent aminotransferase family.</text>
</comment>
<comment type="caution">
    <text evidence="2">Does not seem to possess aminotransferase activity.</text>
</comment>
<accession>Q7SY54</accession>
<gene>
    <name type="primary">etnppl</name>
    <name type="synonym">agxt2l1</name>
    <name type="ORF">zgc:63486</name>
</gene>